<keyword id="KW-0238">DNA-binding</keyword>
<reference key="1">
    <citation type="journal article" date="2001" name="Lancet">
        <title>Whole genome sequencing of meticillin-resistant Staphylococcus aureus.</title>
        <authorList>
            <person name="Kuroda M."/>
            <person name="Ohta T."/>
            <person name="Uchiyama I."/>
            <person name="Baba T."/>
            <person name="Yuzawa H."/>
            <person name="Kobayashi I."/>
            <person name="Cui L."/>
            <person name="Oguchi A."/>
            <person name="Aoki K."/>
            <person name="Nagai Y."/>
            <person name="Lian J.-Q."/>
            <person name="Ito T."/>
            <person name="Kanamori M."/>
            <person name="Matsumaru H."/>
            <person name="Maruyama A."/>
            <person name="Murakami H."/>
            <person name="Hosoyama A."/>
            <person name="Mizutani-Ui Y."/>
            <person name="Takahashi N.K."/>
            <person name="Sawano T."/>
            <person name="Inoue R."/>
            <person name="Kaito C."/>
            <person name="Sekimizu K."/>
            <person name="Hirakawa H."/>
            <person name="Kuhara S."/>
            <person name="Goto S."/>
            <person name="Yabuzaki J."/>
            <person name="Kanehisa M."/>
            <person name="Yamashita A."/>
            <person name="Oshima K."/>
            <person name="Furuya K."/>
            <person name="Yoshino C."/>
            <person name="Shiba T."/>
            <person name="Hattori M."/>
            <person name="Ogasawara N."/>
            <person name="Hayashi H."/>
            <person name="Hiramatsu K."/>
        </authorList>
    </citation>
    <scope>NUCLEOTIDE SEQUENCE [LARGE SCALE GENOMIC DNA]</scope>
    <source>
        <strain>Mu50 / ATCC 700699</strain>
    </source>
</reference>
<evidence type="ECO:0000250" key="1"/>
<evidence type="ECO:0000255" key="2"/>
<evidence type="ECO:0000256" key="3">
    <source>
        <dbReference type="SAM" id="MobiDB-lite"/>
    </source>
</evidence>
<evidence type="ECO:0000305" key="4"/>
<proteinExistence type="inferred from homology"/>
<name>PRE2_STAAM</name>
<sequence>MSYAVCRMQKVKSAGLKGMQFHNQRERKSRTNDDIDHERTRENYDLKNDKNIDYNERVKEIIESQKTGTRKTRKDAVLVNELLVTSDRDFFEQLDPGEQKRFFEESYKLFSERYGKQNIAYATVHNDEQTPHMHLGVVPMRDGKLQGKNVFNRQELLWLQDKFPEHMKKQGFELKRGERGSDRKHIETAKFKKQTLEKEIDFLEKNLAVKKDEWTAYSDKVKSDLEVPAKRHMKSVEVPTGEKSMFGLGKEIMKTEKKPTKNVVISERDYKNLVTAARDNDRLKQHVRNLMSTDMAREYKKLSKEHGQVKEKYSGLVERFNENVNDYNELLEENKSLKSKISDLKRDVSLIYESTKEFLKERTDGLKAFKNVFKGFVDKVKDKTAQFQEKHDLEPKKNEFELTHNREVKKERSRDQGMSL</sequence>
<protein>
    <recommendedName>
        <fullName>Plasmid recombination enzyme type 2</fullName>
    </recommendedName>
    <alternativeName>
        <fullName>Mobilization protein</fullName>
    </alternativeName>
    <alternativeName>
        <fullName>Plasmid recombinase</fullName>
    </alternativeName>
</protein>
<comment type="function">
    <text evidence="1">The interaction of the RSA site and the PRE protein may not only serves a function in plasmid maintenance, but may also contributes to the distribution of small antibiotic resistance plasmids among Gram-positive bacteria.</text>
</comment>
<comment type="miscellaneous">
    <text>Contains conserved positively charged amino acids probably involved in the binding of the pre protein to the RSA site.</text>
</comment>
<comment type="similarity">
    <text evidence="4">Belongs to the plasmid mobilization pre family.</text>
</comment>
<accession>P0A0C5</accession>
<accession>P22490</accession>
<accession>Q52091</accession>
<dbReference type="EMBL" id="BA000017">
    <property type="protein sequence ID" value="BAB56193.1"/>
    <property type="molecule type" value="Genomic_DNA"/>
</dbReference>
<dbReference type="SMR" id="P0A0C5"/>
<dbReference type="KEGG" id="sav:SAV0031"/>
<dbReference type="HOGENOM" id="CLU_035698_0_0_9"/>
<dbReference type="Proteomes" id="UP000002481">
    <property type="component" value="Chromosome"/>
</dbReference>
<dbReference type="GO" id="GO:0003677">
    <property type="term" value="F:DNA binding"/>
    <property type="evidence" value="ECO:0007669"/>
    <property type="project" value="UniProtKB-KW"/>
</dbReference>
<dbReference type="GO" id="GO:0006310">
    <property type="term" value="P:DNA recombination"/>
    <property type="evidence" value="ECO:0007669"/>
    <property type="project" value="InterPro"/>
</dbReference>
<dbReference type="CDD" id="cd17242">
    <property type="entry name" value="MobM_relaxase"/>
    <property type="match status" value="1"/>
</dbReference>
<dbReference type="Gene3D" id="3.30.930.30">
    <property type="match status" value="1"/>
</dbReference>
<dbReference type="InterPro" id="IPR001668">
    <property type="entry name" value="Mob_Pre"/>
</dbReference>
<dbReference type="NCBIfam" id="NF041497">
    <property type="entry name" value="MobV"/>
    <property type="match status" value="1"/>
</dbReference>
<dbReference type="Pfam" id="PF01076">
    <property type="entry name" value="Mob_Pre"/>
    <property type="match status" value="1"/>
</dbReference>
<organism>
    <name type="scientific">Staphylococcus aureus (strain Mu50 / ATCC 700699)</name>
    <dbReference type="NCBI Taxonomy" id="158878"/>
    <lineage>
        <taxon>Bacteria</taxon>
        <taxon>Bacillati</taxon>
        <taxon>Bacillota</taxon>
        <taxon>Bacilli</taxon>
        <taxon>Bacillales</taxon>
        <taxon>Staphylococcaceae</taxon>
        <taxon>Staphylococcus</taxon>
    </lineage>
</organism>
<feature type="chain" id="PRO_0000068421" description="Plasmid recombination enzyme type 2">
    <location>
        <begin position="1"/>
        <end position="420"/>
    </location>
</feature>
<feature type="region of interest" description="Disordered" evidence="3">
    <location>
        <begin position="388"/>
        <end position="420"/>
    </location>
</feature>
<feature type="binding site" evidence="2">
    <location>
        <position position="44"/>
    </location>
    <ligand>
        <name>DNA</name>
        <dbReference type="ChEBI" id="CHEBI:16991"/>
    </ligand>
</feature>
<feature type="binding site" evidence="2">
    <location>
        <position position="114"/>
    </location>
    <ligand>
        <name>DNA</name>
        <dbReference type="ChEBI" id="CHEBI:16991"/>
    </ligand>
</feature>
<gene>
    <name type="primary">pre</name>
    <name type="synonym">mob</name>
    <name type="ordered locus">SAV0031</name>
</gene>